<gene>
    <name evidence="1" type="primary">hisC</name>
    <name type="ordered locus">Nwi_0583</name>
</gene>
<evidence type="ECO:0000255" key="1">
    <source>
        <dbReference type="HAMAP-Rule" id="MF_01023"/>
    </source>
</evidence>
<evidence type="ECO:0000256" key="2">
    <source>
        <dbReference type="SAM" id="MobiDB-lite"/>
    </source>
</evidence>
<comment type="catalytic activity">
    <reaction evidence="1">
        <text>L-histidinol phosphate + 2-oxoglutarate = 3-(imidazol-4-yl)-2-oxopropyl phosphate + L-glutamate</text>
        <dbReference type="Rhea" id="RHEA:23744"/>
        <dbReference type="ChEBI" id="CHEBI:16810"/>
        <dbReference type="ChEBI" id="CHEBI:29985"/>
        <dbReference type="ChEBI" id="CHEBI:57766"/>
        <dbReference type="ChEBI" id="CHEBI:57980"/>
        <dbReference type="EC" id="2.6.1.9"/>
    </reaction>
</comment>
<comment type="cofactor">
    <cofactor evidence="1">
        <name>pyridoxal 5'-phosphate</name>
        <dbReference type="ChEBI" id="CHEBI:597326"/>
    </cofactor>
</comment>
<comment type="pathway">
    <text evidence="1">Amino-acid biosynthesis; L-histidine biosynthesis; L-histidine from 5-phospho-alpha-D-ribose 1-diphosphate: step 7/9.</text>
</comment>
<comment type="subunit">
    <text evidence="1">Homodimer.</text>
</comment>
<comment type="similarity">
    <text evidence="1">Belongs to the class-II pyridoxal-phosphate-dependent aminotransferase family. Histidinol-phosphate aminotransferase subfamily.</text>
</comment>
<name>HIS8_NITWN</name>
<proteinExistence type="inferred from homology"/>
<sequence length="365" mass="39892">MSRPVPNPGILDIAPYTPGKSPAPEAGRKVFKLSANETPFGPSPKAMDAYRDAVAHLEDYPEGTSRVLRAAIGRAYGLDPDRIICGAGSDEILNLLAHTFLSHGDEAISTTHAFLVYPIATMANGATNIVAPETGYTADIDAILERVTPKTKMVWLANPNNPTGTYLPFDEIRRLRAGLPPHVLLVLDGAYSDYVSRNDYEFGIELVATTENTVLTHTFSKIHGLAALRIGWMFGPAHIVDAMNRIRGPFNVSTPAMLAAAAAIEDTAHVQMTRMHTEKWRSWLTDELTNLGLKVTPSVTNFILIHFPDARGRTASEADAFLTRRGLVLRALDNYCLPNALRMTIGTEEANRLVADGLRDFMART</sequence>
<feature type="chain" id="PRO_0000153401" description="Histidinol-phosphate aminotransferase">
    <location>
        <begin position="1"/>
        <end position="365"/>
    </location>
</feature>
<feature type="region of interest" description="Disordered" evidence="2">
    <location>
        <begin position="1"/>
        <end position="22"/>
    </location>
</feature>
<feature type="modified residue" description="N6-(pyridoxal phosphate)lysine" evidence="1">
    <location>
        <position position="221"/>
    </location>
</feature>
<dbReference type="EC" id="2.6.1.9" evidence="1"/>
<dbReference type="EMBL" id="CP000115">
    <property type="protein sequence ID" value="ABA03850.1"/>
    <property type="molecule type" value="Genomic_DNA"/>
</dbReference>
<dbReference type="RefSeq" id="WP_011313911.1">
    <property type="nucleotide sequence ID" value="NC_007406.1"/>
</dbReference>
<dbReference type="SMR" id="Q3SV41"/>
<dbReference type="STRING" id="323098.Nwi_0583"/>
<dbReference type="KEGG" id="nwi:Nwi_0583"/>
<dbReference type="eggNOG" id="COG0079">
    <property type="taxonomic scope" value="Bacteria"/>
</dbReference>
<dbReference type="HOGENOM" id="CLU_017584_3_3_5"/>
<dbReference type="OrthoDB" id="9809616at2"/>
<dbReference type="UniPathway" id="UPA00031">
    <property type="reaction ID" value="UER00012"/>
</dbReference>
<dbReference type="Proteomes" id="UP000002531">
    <property type="component" value="Chromosome"/>
</dbReference>
<dbReference type="GO" id="GO:0004400">
    <property type="term" value="F:histidinol-phosphate transaminase activity"/>
    <property type="evidence" value="ECO:0007669"/>
    <property type="project" value="UniProtKB-UniRule"/>
</dbReference>
<dbReference type="GO" id="GO:0030170">
    <property type="term" value="F:pyridoxal phosphate binding"/>
    <property type="evidence" value="ECO:0007669"/>
    <property type="project" value="InterPro"/>
</dbReference>
<dbReference type="GO" id="GO:0000105">
    <property type="term" value="P:L-histidine biosynthetic process"/>
    <property type="evidence" value="ECO:0007669"/>
    <property type="project" value="UniProtKB-UniRule"/>
</dbReference>
<dbReference type="CDD" id="cd00609">
    <property type="entry name" value="AAT_like"/>
    <property type="match status" value="1"/>
</dbReference>
<dbReference type="Gene3D" id="3.90.1150.10">
    <property type="entry name" value="Aspartate Aminotransferase, domain 1"/>
    <property type="match status" value="1"/>
</dbReference>
<dbReference type="Gene3D" id="3.40.640.10">
    <property type="entry name" value="Type I PLP-dependent aspartate aminotransferase-like (Major domain)"/>
    <property type="match status" value="1"/>
</dbReference>
<dbReference type="HAMAP" id="MF_01023">
    <property type="entry name" value="HisC_aminotrans_2"/>
    <property type="match status" value="1"/>
</dbReference>
<dbReference type="InterPro" id="IPR004839">
    <property type="entry name" value="Aminotransferase_I/II_large"/>
</dbReference>
<dbReference type="InterPro" id="IPR005861">
    <property type="entry name" value="HisP_aminotrans"/>
</dbReference>
<dbReference type="InterPro" id="IPR050106">
    <property type="entry name" value="HistidinolP_aminotransfase"/>
</dbReference>
<dbReference type="InterPro" id="IPR015424">
    <property type="entry name" value="PyrdxlP-dep_Trfase"/>
</dbReference>
<dbReference type="InterPro" id="IPR015421">
    <property type="entry name" value="PyrdxlP-dep_Trfase_major"/>
</dbReference>
<dbReference type="InterPro" id="IPR015422">
    <property type="entry name" value="PyrdxlP-dep_Trfase_small"/>
</dbReference>
<dbReference type="NCBIfam" id="TIGR01141">
    <property type="entry name" value="hisC"/>
    <property type="match status" value="1"/>
</dbReference>
<dbReference type="PANTHER" id="PTHR43643:SF3">
    <property type="entry name" value="HISTIDINOL-PHOSPHATE AMINOTRANSFERASE"/>
    <property type="match status" value="1"/>
</dbReference>
<dbReference type="PANTHER" id="PTHR43643">
    <property type="entry name" value="HISTIDINOL-PHOSPHATE AMINOTRANSFERASE 2"/>
    <property type="match status" value="1"/>
</dbReference>
<dbReference type="Pfam" id="PF00155">
    <property type="entry name" value="Aminotran_1_2"/>
    <property type="match status" value="1"/>
</dbReference>
<dbReference type="SUPFAM" id="SSF53383">
    <property type="entry name" value="PLP-dependent transferases"/>
    <property type="match status" value="1"/>
</dbReference>
<protein>
    <recommendedName>
        <fullName evidence="1">Histidinol-phosphate aminotransferase</fullName>
        <ecNumber evidence="1">2.6.1.9</ecNumber>
    </recommendedName>
    <alternativeName>
        <fullName evidence="1">Imidazole acetol-phosphate transaminase</fullName>
    </alternativeName>
</protein>
<accession>Q3SV41</accession>
<keyword id="KW-0028">Amino-acid biosynthesis</keyword>
<keyword id="KW-0032">Aminotransferase</keyword>
<keyword id="KW-0368">Histidine biosynthesis</keyword>
<keyword id="KW-0663">Pyridoxal phosphate</keyword>
<keyword id="KW-1185">Reference proteome</keyword>
<keyword id="KW-0808">Transferase</keyword>
<reference key="1">
    <citation type="journal article" date="2006" name="Appl. Environ. Microbiol.">
        <title>Genome sequence of the chemolithoautotrophic nitrite-oxidizing bacterium Nitrobacter winogradskyi Nb-255.</title>
        <authorList>
            <person name="Starkenburg S.R."/>
            <person name="Chain P.S.G."/>
            <person name="Sayavedra-Soto L.A."/>
            <person name="Hauser L."/>
            <person name="Land M.L."/>
            <person name="Larimer F.W."/>
            <person name="Malfatti S.A."/>
            <person name="Klotz M.G."/>
            <person name="Bottomley P.J."/>
            <person name="Arp D.J."/>
            <person name="Hickey W.J."/>
        </authorList>
    </citation>
    <scope>NUCLEOTIDE SEQUENCE [LARGE SCALE GENOMIC DNA]</scope>
    <source>
        <strain>ATCC 25391 / DSM 10237 / CIP 104748 / NCIMB 11846 / Nb-255</strain>
    </source>
</reference>
<organism>
    <name type="scientific">Nitrobacter winogradskyi (strain ATCC 25391 / DSM 10237 / CIP 104748 / NCIMB 11846 / Nb-255)</name>
    <dbReference type="NCBI Taxonomy" id="323098"/>
    <lineage>
        <taxon>Bacteria</taxon>
        <taxon>Pseudomonadati</taxon>
        <taxon>Pseudomonadota</taxon>
        <taxon>Alphaproteobacteria</taxon>
        <taxon>Hyphomicrobiales</taxon>
        <taxon>Nitrobacteraceae</taxon>
        <taxon>Nitrobacter</taxon>
    </lineage>
</organism>